<gene>
    <name evidence="1" type="primary">rplP</name>
    <name type="ordered locus">Sfum_1562</name>
</gene>
<comment type="function">
    <text evidence="1">Binds 23S rRNA and is also seen to make contacts with the A and possibly P site tRNAs.</text>
</comment>
<comment type="subunit">
    <text evidence="1">Part of the 50S ribosomal subunit.</text>
</comment>
<comment type="similarity">
    <text evidence="1">Belongs to the universal ribosomal protein uL16 family.</text>
</comment>
<protein>
    <recommendedName>
        <fullName evidence="1">Large ribosomal subunit protein uL16</fullName>
    </recommendedName>
    <alternativeName>
        <fullName evidence="2">50S ribosomal protein L16</fullName>
    </alternativeName>
</protein>
<sequence length="138" mass="15543">MLAPKRVKFRKQQKGRMRGTAFRGSTLSFGDFGLKALECGYITSRQIEAARIAITRHVKRGGKVWIRFFPDKPFTKKPAETRMGKGKGSPEGWHAVIKPGRVLYEIKGVPETIAREALNLAAHKLPIPTRFVSRQDVL</sequence>
<evidence type="ECO:0000255" key="1">
    <source>
        <dbReference type="HAMAP-Rule" id="MF_01342"/>
    </source>
</evidence>
<evidence type="ECO:0000305" key="2"/>
<dbReference type="EMBL" id="CP000478">
    <property type="protein sequence ID" value="ABK17249.1"/>
    <property type="molecule type" value="Genomic_DNA"/>
</dbReference>
<dbReference type="RefSeq" id="WP_011698419.1">
    <property type="nucleotide sequence ID" value="NC_008554.1"/>
</dbReference>
<dbReference type="SMR" id="A0LIJ7"/>
<dbReference type="FunCoup" id="A0LIJ7">
    <property type="interactions" value="587"/>
</dbReference>
<dbReference type="STRING" id="335543.Sfum_1562"/>
<dbReference type="KEGG" id="sfu:Sfum_1562"/>
<dbReference type="eggNOG" id="COG0197">
    <property type="taxonomic scope" value="Bacteria"/>
</dbReference>
<dbReference type="HOGENOM" id="CLU_078858_2_1_7"/>
<dbReference type="InParanoid" id="A0LIJ7"/>
<dbReference type="OrthoDB" id="9802589at2"/>
<dbReference type="Proteomes" id="UP000001784">
    <property type="component" value="Chromosome"/>
</dbReference>
<dbReference type="GO" id="GO:0022625">
    <property type="term" value="C:cytosolic large ribosomal subunit"/>
    <property type="evidence" value="ECO:0007669"/>
    <property type="project" value="TreeGrafter"/>
</dbReference>
<dbReference type="GO" id="GO:0019843">
    <property type="term" value="F:rRNA binding"/>
    <property type="evidence" value="ECO:0007669"/>
    <property type="project" value="UniProtKB-UniRule"/>
</dbReference>
<dbReference type="GO" id="GO:0003735">
    <property type="term" value="F:structural constituent of ribosome"/>
    <property type="evidence" value="ECO:0007669"/>
    <property type="project" value="InterPro"/>
</dbReference>
<dbReference type="GO" id="GO:0000049">
    <property type="term" value="F:tRNA binding"/>
    <property type="evidence" value="ECO:0007669"/>
    <property type="project" value="UniProtKB-KW"/>
</dbReference>
<dbReference type="GO" id="GO:0006412">
    <property type="term" value="P:translation"/>
    <property type="evidence" value="ECO:0007669"/>
    <property type="project" value="UniProtKB-UniRule"/>
</dbReference>
<dbReference type="CDD" id="cd01433">
    <property type="entry name" value="Ribosomal_L16_L10e"/>
    <property type="match status" value="1"/>
</dbReference>
<dbReference type="FunFam" id="3.90.1170.10:FF:000001">
    <property type="entry name" value="50S ribosomal protein L16"/>
    <property type="match status" value="1"/>
</dbReference>
<dbReference type="Gene3D" id="3.90.1170.10">
    <property type="entry name" value="Ribosomal protein L10e/L16"/>
    <property type="match status" value="1"/>
</dbReference>
<dbReference type="HAMAP" id="MF_01342">
    <property type="entry name" value="Ribosomal_uL16"/>
    <property type="match status" value="1"/>
</dbReference>
<dbReference type="InterPro" id="IPR047873">
    <property type="entry name" value="Ribosomal_uL16"/>
</dbReference>
<dbReference type="InterPro" id="IPR000114">
    <property type="entry name" value="Ribosomal_uL16_bact-type"/>
</dbReference>
<dbReference type="InterPro" id="IPR020798">
    <property type="entry name" value="Ribosomal_uL16_CS"/>
</dbReference>
<dbReference type="InterPro" id="IPR016180">
    <property type="entry name" value="Ribosomal_uL16_dom"/>
</dbReference>
<dbReference type="InterPro" id="IPR036920">
    <property type="entry name" value="Ribosomal_uL16_sf"/>
</dbReference>
<dbReference type="NCBIfam" id="TIGR01164">
    <property type="entry name" value="rplP_bact"/>
    <property type="match status" value="1"/>
</dbReference>
<dbReference type="PANTHER" id="PTHR12220">
    <property type="entry name" value="50S/60S RIBOSOMAL PROTEIN L16"/>
    <property type="match status" value="1"/>
</dbReference>
<dbReference type="PANTHER" id="PTHR12220:SF13">
    <property type="entry name" value="LARGE RIBOSOMAL SUBUNIT PROTEIN UL16M"/>
    <property type="match status" value="1"/>
</dbReference>
<dbReference type="Pfam" id="PF00252">
    <property type="entry name" value="Ribosomal_L16"/>
    <property type="match status" value="1"/>
</dbReference>
<dbReference type="PRINTS" id="PR00060">
    <property type="entry name" value="RIBOSOMALL16"/>
</dbReference>
<dbReference type="SUPFAM" id="SSF54686">
    <property type="entry name" value="Ribosomal protein L16p/L10e"/>
    <property type="match status" value="1"/>
</dbReference>
<dbReference type="PROSITE" id="PS00701">
    <property type="entry name" value="RIBOSOMAL_L16_2"/>
    <property type="match status" value="1"/>
</dbReference>
<reference key="1">
    <citation type="submission" date="2006-10" db="EMBL/GenBank/DDBJ databases">
        <title>Complete sequence of Syntrophobacter fumaroxidans MPOB.</title>
        <authorList>
            <consortium name="US DOE Joint Genome Institute"/>
            <person name="Copeland A."/>
            <person name="Lucas S."/>
            <person name="Lapidus A."/>
            <person name="Barry K."/>
            <person name="Detter J.C."/>
            <person name="Glavina del Rio T."/>
            <person name="Hammon N."/>
            <person name="Israni S."/>
            <person name="Pitluck S."/>
            <person name="Goltsman E.G."/>
            <person name="Martinez M."/>
            <person name="Schmutz J."/>
            <person name="Larimer F."/>
            <person name="Land M."/>
            <person name="Hauser L."/>
            <person name="Kyrpides N."/>
            <person name="Kim E."/>
            <person name="Boone D.R."/>
            <person name="Brockman F."/>
            <person name="Culley D."/>
            <person name="Ferry J."/>
            <person name="Gunsalus R."/>
            <person name="McInerney M.J."/>
            <person name="Morrison M."/>
            <person name="Plugge C."/>
            <person name="Rohlin L."/>
            <person name="Scholten J."/>
            <person name="Sieber J."/>
            <person name="Stams A.J.M."/>
            <person name="Worm P."/>
            <person name="Henstra A.M."/>
            <person name="Richardson P."/>
        </authorList>
    </citation>
    <scope>NUCLEOTIDE SEQUENCE [LARGE SCALE GENOMIC DNA]</scope>
    <source>
        <strain>DSM 10017 / MPOB</strain>
    </source>
</reference>
<proteinExistence type="inferred from homology"/>
<keyword id="KW-1185">Reference proteome</keyword>
<keyword id="KW-0687">Ribonucleoprotein</keyword>
<keyword id="KW-0689">Ribosomal protein</keyword>
<keyword id="KW-0694">RNA-binding</keyword>
<keyword id="KW-0699">rRNA-binding</keyword>
<keyword id="KW-0820">tRNA-binding</keyword>
<name>RL16_SYNFM</name>
<accession>A0LIJ7</accession>
<organism>
    <name type="scientific">Syntrophobacter fumaroxidans (strain DSM 10017 / MPOB)</name>
    <dbReference type="NCBI Taxonomy" id="335543"/>
    <lineage>
        <taxon>Bacteria</taxon>
        <taxon>Pseudomonadati</taxon>
        <taxon>Thermodesulfobacteriota</taxon>
        <taxon>Syntrophobacteria</taxon>
        <taxon>Syntrophobacterales</taxon>
        <taxon>Syntrophobacteraceae</taxon>
        <taxon>Syntrophobacter</taxon>
    </lineage>
</organism>
<feature type="chain" id="PRO_1000054721" description="Large ribosomal subunit protein uL16">
    <location>
        <begin position="1"/>
        <end position="138"/>
    </location>
</feature>